<proteinExistence type="evidence at protein level"/>
<sequence length="34" mass="4026">ISIVSLFKAITDMLLTEQIYANYFSTPRLRFYPI</sequence>
<dbReference type="PIR" id="A01633">
    <property type="entry name" value="ONGARA"/>
</dbReference>
<dbReference type="Proteomes" id="UP000694888">
    <property type="component" value="Unplaced"/>
</dbReference>
<feature type="peptide" id="PRO_0000044636" description="Egg-releasing peptide">
    <location>
        <begin position="1"/>
        <end position="34"/>
    </location>
</feature>
<feature type="sequence variant">
    <original>S</original>
    <variation>V</variation>
    <location>
        <position position="2"/>
    </location>
</feature>
<keyword id="KW-0903">Direct protein sequencing</keyword>
<protein>
    <recommendedName>
        <fullName>Egg-releasing peptide</fullName>
    </recommendedName>
</protein>
<name>EGGR_APLCA</name>
<accession>P01363</accession>
<reference key="1">
    <citation type="journal article" date="1981" name="Fed. Proc.">
        <title>Primary structure of an egg releasing peptide from atrial gland of Aplysia.</title>
        <authorList>
            <person name="Schlesinger D.H."/>
            <person name="Babirak S.P."/>
            <person name="Blankenship J.E."/>
        </authorList>
    </citation>
    <scope>PROTEIN SEQUENCE</scope>
</reference>
<organism>
    <name type="scientific">Aplysia californica</name>
    <name type="common">California sea hare</name>
    <dbReference type="NCBI Taxonomy" id="6500"/>
    <lineage>
        <taxon>Eukaryota</taxon>
        <taxon>Metazoa</taxon>
        <taxon>Spiralia</taxon>
        <taxon>Lophotrochozoa</taxon>
        <taxon>Mollusca</taxon>
        <taxon>Gastropoda</taxon>
        <taxon>Heterobranchia</taxon>
        <taxon>Euthyneura</taxon>
        <taxon>Tectipleura</taxon>
        <taxon>Aplysiida</taxon>
        <taxon>Aplysioidea</taxon>
        <taxon>Aplysiidae</taxon>
        <taxon>Aplysia</taxon>
    </lineage>
</organism>